<proteinExistence type="inferred from homology"/>
<feature type="chain" id="PRO_0000201953" description="Probable phosphoribulokinase">
    <location>
        <begin position="1"/>
        <end position="289"/>
    </location>
</feature>
<feature type="binding site" evidence="1">
    <location>
        <begin position="12"/>
        <end position="20"/>
    </location>
    <ligand>
        <name>ATP</name>
        <dbReference type="ChEBI" id="CHEBI:30616"/>
    </ligand>
</feature>
<reference key="1">
    <citation type="journal article" date="2002" name="Nucleic Acids Res.">
        <title>Genome sequence of Shigella flexneri 2a: insights into pathogenicity through comparison with genomes of Escherichia coli K12 and O157.</title>
        <authorList>
            <person name="Jin Q."/>
            <person name="Yuan Z."/>
            <person name="Xu J."/>
            <person name="Wang Y."/>
            <person name="Shen Y."/>
            <person name="Lu W."/>
            <person name="Wang J."/>
            <person name="Liu H."/>
            <person name="Yang J."/>
            <person name="Yang F."/>
            <person name="Zhang X."/>
            <person name="Zhang J."/>
            <person name="Yang G."/>
            <person name="Wu H."/>
            <person name="Qu D."/>
            <person name="Dong J."/>
            <person name="Sun L."/>
            <person name="Xue Y."/>
            <person name="Zhao A."/>
            <person name="Gao Y."/>
            <person name="Zhu J."/>
            <person name="Kan B."/>
            <person name="Ding K."/>
            <person name="Chen S."/>
            <person name="Cheng H."/>
            <person name="Yao Z."/>
            <person name="He B."/>
            <person name="Chen R."/>
            <person name="Ma D."/>
            <person name="Qiang B."/>
            <person name="Wen Y."/>
            <person name="Hou Y."/>
            <person name="Yu J."/>
        </authorList>
    </citation>
    <scope>NUCLEOTIDE SEQUENCE [LARGE SCALE GENOMIC DNA]</scope>
    <source>
        <strain>301 / Serotype 2a</strain>
    </source>
</reference>
<reference key="2">
    <citation type="journal article" date="2003" name="Infect. Immun.">
        <title>Complete genome sequence and comparative genomics of Shigella flexneri serotype 2a strain 2457T.</title>
        <authorList>
            <person name="Wei J."/>
            <person name="Goldberg M.B."/>
            <person name="Burland V."/>
            <person name="Venkatesan M.M."/>
            <person name="Deng W."/>
            <person name="Fournier G."/>
            <person name="Mayhew G.F."/>
            <person name="Plunkett G. III"/>
            <person name="Rose D.J."/>
            <person name="Darling A."/>
            <person name="Mau B."/>
            <person name="Perna N.T."/>
            <person name="Payne S.M."/>
            <person name="Runyen-Janecky L.J."/>
            <person name="Zhou S."/>
            <person name="Schwartz D.C."/>
            <person name="Blattner F.R."/>
        </authorList>
    </citation>
    <scope>NUCLEOTIDE SEQUENCE [LARGE SCALE GENOMIC DNA]</scope>
    <source>
        <strain>ATCC 700930 / 2457T / Serotype 2a</strain>
    </source>
</reference>
<sequence length="289" mass="32344">MSAKHPVIAVTGSSGAGTTTTSLAFRKIFAQLNLHAAEVEGDSFHRYTRPEMDMAIRKARDAGRHISYFGPEANDFGLLEQTFIEYGQSGKGKSRKYLHTYDEAVPWNQVPGTFTPWQPLPEPTDVLFYEGLHGGVVTPQHNVAQHVDLLVGVVPIVNLEWIQKLIRDTSERGHSREAVMDSVVRSMEDYINYITPQFSRTHLNFQRVPTVDTSNPFAAKGIPSLDESFVVIHFRNLEGIDFPWLLAMLQGSFISHINTLVVPGGKMGLAMELIMLPLVQRLMEGKKIE</sequence>
<dbReference type="EC" id="2.7.1.19"/>
<dbReference type="EMBL" id="AE005674">
    <property type="protein sequence ID" value="AAN44837.1"/>
    <property type="molecule type" value="Genomic_DNA"/>
</dbReference>
<dbReference type="EMBL" id="AE014073">
    <property type="protein sequence ID" value="AAP19341.1"/>
    <property type="molecule type" value="Genomic_DNA"/>
</dbReference>
<dbReference type="RefSeq" id="NP_709130.1">
    <property type="nucleotide sequence ID" value="NC_004337.2"/>
</dbReference>
<dbReference type="RefSeq" id="WP_001274680.1">
    <property type="nucleotide sequence ID" value="NZ_WPGW01000003.1"/>
</dbReference>
<dbReference type="SMR" id="P0AEX6"/>
<dbReference type="STRING" id="198214.SF3374"/>
<dbReference type="PaxDb" id="198214-SF3374"/>
<dbReference type="GeneID" id="1026963"/>
<dbReference type="KEGG" id="sfl:SF3374"/>
<dbReference type="KEGG" id="sfx:S4389"/>
<dbReference type="PATRIC" id="fig|198214.7.peg.3984"/>
<dbReference type="HOGENOM" id="CLU_962223_0_0_6"/>
<dbReference type="Proteomes" id="UP000001006">
    <property type="component" value="Chromosome"/>
</dbReference>
<dbReference type="Proteomes" id="UP000002673">
    <property type="component" value="Chromosome"/>
</dbReference>
<dbReference type="GO" id="GO:0005524">
    <property type="term" value="F:ATP binding"/>
    <property type="evidence" value="ECO:0007669"/>
    <property type="project" value="UniProtKB-KW"/>
</dbReference>
<dbReference type="GO" id="GO:0008974">
    <property type="term" value="F:phosphoribulokinase activity"/>
    <property type="evidence" value="ECO:0007669"/>
    <property type="project" value="UniProtKB-EC"/>
</dbReference>
<dbReference type="GO" id="GO:0005975">
    <property type="term" value="P:carbohydrate metabolic process"/>
    <property type="evidence" value="ECO:0007669"/>
    <property type="project" value="InterPro"/>
</dbReference>
<dbReference type="CDD" id="cd02029">
    <property type="entry name" value="PRK_like"/>
    <property type="match status" value="1"/>
</dbReference>
<dbReference type="FunFam" id="3.40.50.300:FF:000307">
    <property type="entry name" value="Phosphoribulokinase"/>
    <property type="match status" value="1"/>
</dbReference>
<dbReference type="Gene3D" id="3.40.50.300">
    <property type="entry name" value="P-loop containing nucleotide triphosphate hydrolases"/>
    <property type="match status" value="1"/>
</dbReference>
<dbReference type="InterPro" id="IPR027417">
    <property type="entry name" value="P-loop_NTPase"/>
</dbReference>
<dbReference type="InterPro" id="IPR006082">
    <property type="entry name" value="PRK"/>
</dbReference>
<dbReference type="InterPro" id="IPR006083">
    <property type="entry name" value="PRK/URK"/>
</dbReference>
<dbReference type="NCBIfam" id="NF011997">
    <property type="entry name" value="PRK15453.1"/>
    <property type="match status" value="1"/>
</dbReference>
<dbReference type="Pfam" id="PF00485">
    <property type="entry name" value="PRK"/>
    <property type="match status" value="1"/>
</dbReference>
<dbReference type="PRINTS" id="PR00478">
    <property type="entry name" value="PHRIBLKINASE"/>
</dbReference>
<dbReference type="SUPFAM" id="SSF52540">
    <property type="entry name" value="P-loop containing nucleoside triphosphate hydrolases"/>
    <property type="match status" value="1"/>
</dbReference>
<dbReference type="PROSITE" id="PS00567">
    <property type="entry name" value="PHOSPHORIBULOKINASE"/>
    <property type="match status" value="1"/>
</dbReference>
<keyword id="KW-0067">ATP-binding</keyword>
<keyword id="KW-0418">Kinase</keyword>
<keyword id="KW-0547">Nucleotide-binding</keyword>
<keyword id="KW-1185">Reference proteome</keyword>
<keyword id="KW-0808">Transferase</keyword>
<name>KPPR_SHIFL</name>
<gene>
    <name type="primary">prkB</name>
    <name type="ordered locus">SF3374</name>
    <name type="ordered locus">S4389</name>
</gene>
<comment type="catalytic activity">
    <reaction>
        <text>D-ribulose 5-phosphate + ATP = D-ribulose 1,5-bisphosphate + ADP + H(+)</text>
        <dbReference type="Rhea" id="RHEA:19365"/>
        <dbReference type="ChEBI" id="CHEBI:15378"/>
        <dbReference type="ChEBI" id="CHEBI:30616"/>
        <dbReference type="ChEBI" id="CHEBI:57870"/>
        <dbReference type="ChEBI" id="CHEBI:58121"/>
        <dbReference type="ChEBI" id="CHEBI:456216"/>
        <dbReference type="EC" id="2.7.1.19"/>
    </reaction>
</comment>
<comment type="similarity">
    <text evidence="2">Belongs to the phosphoribulokinase family.</text>
</comment>
<accession>P0AEX6</accession>
<accession>P37307</accession>
<accession>P76684</accession>
<organism>
    <name type="scientific">Shigella flexneri</name>
    <dbReference type="NCBI Taxonomy" id="623"/>
    <lineage>
        <taxon>Bacteria</taxon>
        <taxon>Pseudomonadati</taxon>
        <taxon>Pseudomonadota</taxon>
        <taxon>Gammaproteobacteria</taxon>
        <taxon>Enterobacterales</taxon>
        <taxon>Enterobacteriaceae</taxon>
        <taxon>Shigella</taxon>
    </lineage>
</organism>
<evidence type="ECO:0000250" key="1"/>
<evidence type="ECO:0000305" key="2"/>
<protein>
    <recommendedName>
        <fullName>Probable phosphoribulokinase</fullName>
        <shortName>PRK</shortName>
        <shortName>PRKase</shortName>
        <ecNumber>2.7.1.19</ecNumber>
    </recommendedName>
    <alternativeName>
        <fullName>Phosphopentokinase</fullName>
    </alternativeName>
</protein>